<protein>
    <recommendedName>
        <fullName evidence="4">Methylesterase 9</fullName>
        <shortName evidence="4">AtMES9</shortName>
        <ecNumber evidence="2">3.1.1.-</ecNumber>
    </recommendedName>
</protein>
<dbReference type="EC" id="3.1.1.-" evidence="2"/>
<dbReference type="EMBL" id="Z99707">
    <property type="protein sequence ID" value="CAB16760.1"/>
    <property type="molecule type" value="Genomic_DNA"/>
</dbReference>
<dbReference type="EMBL" id="AL161590">
    <property type="protein sequence ID" value="CAB80381.1"/>
    <property type="molecule type" value="Genomic_DNA"/>
</dbReference>
<dbReference type="EMBL" id="CP002687">
    <property type="protein sequence ID" value="AEE86759.1"/>
    <property type="molecule type" value="Genomic_DNA"/>
</dbReference>
<dbReference type="EMBL" id="AK117107">
    <property type="protein sequence ID" value="BAC41786.1"/>
    <property type="molecule type" value="mRNA"/>
</dbReference>
<dbReference type="EMBL" id="BT006227">
    <property type="protein sequence ID" value="AAP12876.1"/>
    <property type="molecule type" value="mRNA"/>
</dbReference>
<dbReference type="EMBL" id="AB493724">
    <property type="protein sequence ID" value="BAH30562.1"/>
    <property type="molecule type" value="mRNA"/>
</dbReference>
<dbReference type="PIR" id="H85438">
    <property type="entry name" value="H85438"/>
</dbReference>
<dbReference type="RefSeq" id="NP_195432.1">
    <property type="nucleotide sequence ID" value="NM_119878.5"/>
</dbReference>
<dbReference type="SMR" id="O23171"/>
<dbReference type="BioGRID" id="15150">
    <property type="interactions" value="4"/>
</dbReference>
<dbReference type="FunCoup" id="O23171">
    <property type="interactions" value="3"/>
</dbReference>
<dbReference type="IntAct" id="O23171">
    <property type="interactions" value="3"/>
</dbReference>
<dbReference type="STRING" id="3702.O23171"/>
<dbReference type="ESTHER" id="arath-AT4G37150">
    <property type="family name" value="Hydroxynitrile_lyase"/>
</dbReference>
<dbReference type="PaxDb" id="3702-AT4G37150.1"/>
<dbReference type="ProteomicsDB" id="232251"/>
<dbReference type="EnsemblPlants" id="AT4G37150.1">
    <property type="protein sequence ID" value="AT4G37150.1"/>
    <property type="gene ID" value="AT4G37150"/>
</dbReference>
<dbReference type="GeneID" id="829869"/>
<dbReference type="Gramene" id="AT4G37150.1">
    <property type="protein sequence ID" value="AT4G37150.1"/>
    <property type="gene ID" value="AT4G37150"/>
</dbReference>
<dbReference type="KEGG" id="ath:AT4G37150"/>
<dbReference type="Araport" id="AT4G37150"/>
<dbReference type="TAIR" id="AT4G37150">
    <property type="gene designation" value="MES9"/>
</dbReference>
<dbReference type="HOGENOM" id="CLU_046066_0_1_1"/>
<dbReference type="InParanoid" id="O23171"/>
<dbReference type="OMA" id="AKMLMRV"/>
<dbReference type="PhylomeDB" id="O23171"/>
<dbReference type="BioCyc" id="ARA:AT4G37150-MONOMER"/>
<dbReference type="SABIO-RK" id="O23171"/>
<dbReference type="UniPathway" id="UPA00382"/>
<dbReference type="PRO" id="PR:O23171"/>
<dbReference type="Proteomes" id="UP000006548">
    <property type="component" value="Chromosome 4"/>
</dbReference>
<dbReference type="ExpressionAtlas" id="O23171">
    <property type="expression patterns" value="baseline and differential"/>
</dbReference>
<dbReference type="GO" id="GO:0016788">
    <property type="term" value="F:hydrolase activity, acting on ester bonds"/>
    <property type="evidence" value="ECO:0000314"/>
    <property type="project" value="TAIR"/>
</dbReference>
<dbReference type="GO" id="GO:0080030">
    <property type="term" value="F:methyl indole-3-acetate esterase activity"/>
    <property type="evidence" value="ECO:0000314"/>
    <property type="project" value="TAIR"/>
</dbReference>
<dbReference type="GO" id="GO:0080032">
    <property type="term" value="F:methyl jasmonate esterase activity"/>
    <property type="evidence" value="ECO:0000314"/>
    <property type="project" value="TAIR"/>
</dbReference>
<dbReference type="GO" id="GO:0080031">
    <property type="term" value="F:methyl salicylate esterase activity"/>
    <property type="evidence" value="ECO:0000315"/>
    <property type="project" value="TAIR"/>
</dbReference>
<dbReference type="GO" id="GO:0050832">
    <property type="term" value="P:defense response to fungus"/>
    <property type="evidence" value="ECO:0000304"/>
    <property type="project" value="TAIR"/>
</dbReference>
<dbReference type="GO" id="GO:0045087">
    <property type="term" value="P:innate immune response"/>
    <property type="evidence" value="ECO:0007669"/>
    <property type="project" value="UniProtKB-KW"/>
</dbReference>
<dbReference type="GO" id="GO:0009694">
    <property type="term" value="P:jasmonic acid metabolic process"/>
    <property type="evidence" value="ECO:0000314"/>
    <property type="project" value="TAIR"/>
</dbReference>
<dbReference type="GO" id="GO:0031408">
    <property type="term" value="P:oxylipin biosynthetic process"/>
    <property type="evidence" value="ECO:0007669"/>
    <property type="project" value="UniProtKB-UniPathway"/>
</dbReference>
<dbReference type="GO" id="GO:0009696">
    <property type="term" value="P:salicylic acid metabolic process"/>
    <property type="evidence" value="ECO:0000314"/>
    <property type="project" value="TAIR"/>
</dbReference>
<dbReference type="GO" id="GO:0009627">
    <property type="term" value="P:systemic acquired resistance"/>
    <property type="evidence" value="ECO:0000316"/>
    <property type="project" value="TAIR"/>
</dbReference>
<dbReference type="FunFam" id="3.40.50.1820:FF:000051">
    <property type="entry name" value="(S)-hydroxynitrile lyase"/>
    <property type="match status" value="1"/>
</dbReference>
<dbReference type="Gene3D" id="3.40.50.1820">
    <property type="entry name" value="alpha/beta hydrolase"/>
    <property type="match status" value="1"/>
</dbReference>
<dbReference type="InterPro" id="IPR000073">
    <property type="entry name" value="AB_hydrolase_1"/>
</dbReference>
<dbReference type="InterPro" id="IPR029058">
    <property type="entry name" value="AB_hydrolase_fold"/>
</dbReference>
<dbReference type="InterPro" id="IPR045889">
    <property type="entry name" value="MES/HNL"/>
</dbReference>
<dbReference type="PANTHER" id="PTHR10992:SF1028">
    <property type="entry name" value="METHYLESTERASE 9"/>
    <property type="match status" value="1"/>
</dbReference>
<dbReference type="PANTHER" id="PTHR10992">
    <property type="entry name" value="METHYLESTERASE FAMILY MEMBER"/>
    <property type="match status" value="1"/>
</dbReference>
<dbReference type="Pfam" id="PF12697">
    <property type="entry name" value="Abhydrolase_6"/>
    <property type="match status" value="1"/>
</dbReference>
<dbReference type="SUPFAM" id="SSF53474">
    <property type="entry name" value="alpha/beta-Hydrolases"/>
    <property type="match status" value="1"/>
</dbReference>
<reference key="1">
    <citation type="journal article" date="1998" name="Nature">
        <title>Analysis of 1.9 Mb of contiguous sequence from chromosome 4 of Arabidopsis thaliana.</title>
        <authorList>
            <person name="Bevan M."/>
            <person name="Bancroft I."/>
            <person name="Bent E."/>
            <person name="Love K."/>
            <person name="Goodman H.M."/>
            <person name="Dean C."/>
            <person name="Bergkamp R."/>
            <person name="Dirkse W."/>
            <person name="van Staveren M."/>
            <person name="Stiekema W."/>
            <person name="Drost L."/>
            <person name="Ridley P."/>
            <person name="Hudson S.-A."/>
            <person name="Patel K."/>
            <person name="Murphy G."/>
            <person name="Piffanelli P."/>
            <person name="Wedler H."/>
            <person name="Wedler E."/>
            <person name="Wambutt R."/>
            <person name="Weitzenegger T."/>
            <person name="Pohl T."/>
            <person name="Terryn N."/>
            <person name="Gielen J."/>
            <person name="Villarroel R."/>
            <person name="De Clercq R."/>
            <person name="van Montagu M."/>
            <person name="Lecharny A."/>
            <person name="Aubourg S."/>
            <person name="Gy I."/>
            <person name="Kreis M."/>
            <person name="Lao N."/>
            <person name="Kavanagh T."/>
            <person name="Hempel S."/>
            <person name="Kotter P."/>
            <person name="Entian K.-D."/>
            <person name="Rieger M."/>
            <person name="Schaefer M."/>
            <person name="Funk B."/>
            <person name="Mueller-Auer S."/>
            <person name="Silvey M."/>
            <person name="James R."/>
            <person name="Monfort A."/>
            <person name="Pons A."/>
            <person name="Puigdomenech P."/>
            <person name="Douka A."/>
            <person name="Voukelatou E."/>
            <person name="Milioni D."/>
            <person name="Hatzopoulos P."/>
            <person name="Piravandi E."/>
            <person name="Obermaier B."/>
            <person name="Hilbert H."/>
            <person name="Duesterhoeft A."/>
            <person name="Moores T."/>
            <person name="Jones J.D.G."/>
            <person name="Eneva T."/>
            <person name="Palme K."/>
            <person name="Benes V."/>
            <person name="Rechmann S."/>
            <person name="Ansorge W."/>
            <person name="Cooke R."/>
            <person name="Berger C."/>
            <person name="Delseny M."/>
            <person name="Voet M."/>
            <person name="Volckaert G."/>
            <person name="Mewes H.-W."/>
            <person name="Klosterman S."/>
            <person name="Schueller C."/>
            <person name="Chalwatzis N."/>
        </authorList>
    </citation>
    <scope>NUCLEOTIDE SEQUENCE [LARGE SCALE GENOMIC DNA]</scope>
    <source>
        <strain>cv. Columbia</strain>
    </source>
</reference>
<reference key="2">
    <citation type="journal article" date="1999" name="Nature">
        <title>Sequence and analysis of chromosome 4 of the plant Arabidopsis thaliana.</title>
        <authorList>
            <person name="Mayer K.F.X."/>
            <person name="Schueller C."/>
            <person name="Wambutt R."/>
            <person name="Murphy G."/>
            <person name="Volckaert G."/>
            <person name="Pohl T."/>
            <person name="Duesterhoeft A."/>
            <person name="Stiekema W."/>
            <person name="Entian K.-D."/>
            <person name="Terryn N."/>
            <person name="Harris B."/>
            <person name="Ansorge W."/>
            <person name="Brandt P."/>
            <person name="Grivell L.A."/>
            <person name="Rieger M."/>
            <person name="Weichselgartner M."/>
            <person name="de Simone V."/>
            <person name="Obermaier B."/>
            <person name="Mache R."/>
            <person name="Mueller M."/>
            <person name="Kreis M."/>
            <person name="Delseny M."/>
            <person name="Puigdomenech P."/>
            <person name="Watson M."/>
            <person name="Schmidtheini T."/>
            <person name="Reichert B."/>
            <person name="Portetelle D."/>
            <person name="Perez-Alonso M."/>
            <person name="Boutry M."/>
            <person name="Bancroft I."/>
            <person name="Vos P."/>
            <person name="Hoheisel J."/>
            <person name="Zimmermann W."/>
            <person name="Wedler H."/>
            <person name="Ridley P."/>
            <person name="Langham S.-A."/>
            <person name="McCullagh B."/>
            <person name="Bilham L."/>
            <person name="Robben J."/>
            <person name="van der Schueren J."/>
            <person name="Grymonprez B."/>
            <person name="Chuang Y.-J."/>
            <person name="Vandenbussche F."/>
            <person name="Braeken M."/>
            <person name="Weltjens I."/>
            <person name="Voet M."/>
            <person name="Bastiaens I."/>
            <person name="Aert R."/>
            <person name="Defoor E."/>
            <person name="Weitzenegger T."/>
            <person name="Bothe G."/>
            <person name="Ramsperger U."/>
            <person name="Hilbert H."/>
            <person name="Braun M."/>
            <person name="Holzer E."/>
            <person name="Brandt A."/>
            <person name="Peters S."/>
            <person name="van Staveren M."/>
            <person name="Dirkse W."/>
            <person name="Mooijman P."/>
            <person name="Klein Lankhorst R."/>
            <person name="Rose M."/>
            <person name="Hauf J."/>
            <person name="Koetter P."/>
            <person name="Berneiser S."/>
            <person name="Hempel S."/>
            <person name="Feldpausch M."/>
            <person name="Lamberth S."/>
            <person name="Van den Daele H."/>
            <person name="De Keyser A."/>
            <person name="Buysshaert C."/>
            <person name="Gielen J."/>
            <person name="Villarroel R."/>
            <person name="De Clercq R."/>
            <person name="van Montagu M."/>
            <person name="Rogers J."/>
            <person name="Cronin A."/>
            <person name="Quail M.A."/>
            <person name="Bray-Allen S."/>
            <person name="Clark L."/>
            <person name="Doggett J."/>
            <person name="Hall S."/>
            <person name="Kay M."/>
            <person name="Lennard N."/>
            <person name="McLay K."/>
            <person name="Mayes R."/>
            <person name="Pettett A."/>
            <person name="Rajandream M.A."/>
            <person name="Lyne M."/>
            <person name="Benes V."/>
            <person name="Rechmann S."/>
            <person name="Borkova D."/>
            <person name="Bloecker H."/>
            <person name="Scharfe M."/>
            <person name="Grimm M."/>
            <person name="Loehnert T.-H."/>
            <person name="Dose S."/>
            <person name="de Haan M."/>
            <person name="Maarse A.C."/>
            <person name="Schaefer M."/>
            <person name="Mueller-Auer S."/>
            <person name="Gabel C."/>
            <person name="Fuchs M."/>
            <person name="Fartmann B."/>
            <person name="Granderath K."/>
            <person name="Dauner D."/>
            <person name="Herzl A."/>
            <person name="Neumann S."/>
            <person name="Argiriou A."/>
            <person name="Vitale D."/>
            <person name="Liguori R."/>
            <person name="Piravandi E."/>
            <person name="Massenet O."/>
            <person name="Quigley F."/>
            <person name="Clabauld G."/>
            <person name="Muendlein A."/>
            <person name="Felber R."/>
            <person name="Schnabl S."/>
            <person name="Hiller R."/>
            <person name="Schmidt W."/>
            <person name="Lecharny A."/>
            <person name="Aubourg S."/>
            <person name="Chefdor F."/>
            <person name="Cooke R."/>
            <person name="Berger C."/>
            <person name="Monfort A."/>
            <person name="Casacuberta E."/>
            <person name="Gibbons T."/>
            <person name="Weber N."/>
            <person name="Vandenbol M."/>
            <person name="Bargues M."/>
            <person name="Terol J."/>
            <person name="Torres A."/>
            <person name="Perez-Perez A."/>
            <person name="Purnelle B."/>
            <person name="Bent E."/>
            <person name="Johnson S."/>
            <person name="Tacon D."/>
            <person name="Jesse T."/>
            <person name="Heijnen L."/>
            <person name="Schwarz S."/>
            <person name="Scholler P."/>
            <person name="Heber S."/>
            <person name="Francs P."/>
            <person name="Bielke C."/>
            <person name="Frishman D."/>
            <person name="Haase D."/>
            <person name="Lemcke K."/>
            <person name="Mewes H.-W."/>
            <person name="Stocker S."/>
            <person name="Zaccaria P."/>
            <person name="Bevan M."/>
            <person name="Wilson R.K."/>
            <person name="de la Bastide M."/>
            <person name="Habermann K."/>
            <person name="Parnell L."/>
            <person name="Dedhia N."/>
            <person name="Gnoj L."/>
            <person name="Schutz K."/>
            <person name="Huang E."/>
            <person name="Spiegel L."/>
            <person name="Sekhon M."/>
            <person name="Murray J."/>
            <person name="Sheet P."/>
            <person name="Cordes M."/>
            <person name="Abu-Threideh J."/>
            <person name="Stoneking T."/>
            <person name="Kalicki J."/>
            <person name="Graves T."/>
            <person name="Harmon G."/>
            <person name="Edwards J."/>
            <person name="Latreille P."/>
            <person name="Courtney L."/>
            <person name="Cloud J."/>
            <person name="Abbott A."/>
            <person name="Scott K."/>
            <person name="Johnson D."/>
            <person name="Minx P."/>
            <person name="Bentley D."/>
            <person name="Fulton B."/>
            <person name="Miller N."/>
            <person name="Greco T."/>
            <person name="Kemp K."/>
            <person name="Kramer J."/>
            <person name="Fulton L."/>
            <person name="Mardis E."/>
            <person name="Dante M."/>
            <person name="Pepin K."/>
            <person name="Hillier L.W."/>
            <person name="Nelson J."/>
            <person name="Spieth J."/>
            <person name="Ryan E."/>
            <person name="Andrews S."/>
            <person name="Geisel C."/>
            <person name="Layman D."/>
            <person name="Du H."/>
            <person name="Ali J."/>
            <person name="Berghoff A."/>
            <person name="Jones K."/>
            <person name="Drone K."/>
            <person name="Cotton M."/>
            <person name="Joshu C."/>
            <person name="Antonoiu B."/>
            <person name="Zidanic M."/>
            <person name="Strong C."/>
            <person name="Sun H."/>
            <person name="Lamar B."/>
            <person name="Yordan C."/>
            <person name="Ma P."/>
            <person name="Zhong J."/>
            <person name="Preston R."/>
            <person name="Vil D."/>
            <person name="Shekher M."/>
            <person name="Matero A."/>
            <person name="Shah R."/>
            <person name="Swaby I.K."/>
            <person name="O'Shaughnessy A."/>
            <person name="Rodriguez M."/>
            <person name="Hoffman J."/>
            <person name="Till S."/>
            <person name="Granat S."/>
            <person name="Shohdy N."/>
            <person name="Hasegawa A."/>
            <person name="Hameed A."/>
            <person name="Lodhi M."/>
            <person name="Johnson A."/>
            <person name="Chen E."/>
            <person name="Marra M.A."/>
            <person name="Martienssen R."/>
            <person name="McCombie W.R."/>
        </authorList>
    </citation>
    <scope>NUCLEOTIDE SEQUENCE [LARGE SCALE GENOMIC DNA]</scope>
    <source>
        <strain>cv. Columbia</strain>
    </source>
</reference>
<reference key="3">
    <citation type="journal article" date="2017" name="Plant J.">
        <title>Araport11: a complete reannotation of the Arabidopsis thaliana reference genome.</title>
        <authorList>
            <person name="Cheng C.Y."/>
            <person name="Krishnakumar V."/>
            <person name="Chan A.P."/>
            <person name="Thibaud-Nissen F."/>
            <person name="Schobel S."/>
            <person name="Town C.D."/>
        </authorList>
    </citation>
    <scope>GENOME REANNOTATION</scope>
    <source>
        <strain>cv. Columbia</strain>
    </source>
</reference>
<reference key="4">
    <citation type="journal article" date="2002" name="Science">
        <title>Functional annotation of a full-length Arabidopsis cDNA collection.</title>
        <authorList>
            <person name="Seki M."/>
            <person name="Narusaka M."/>
            <person name="Kamiya A."/>
            <person name="Ishida J."/>
            <person name="Satou M."/>
            <person name="Sakurai T."/>
            <person name="Nakajima M."/>
            <person name="Enju A."/>
            <person name="Akiyama K."/>
            <person name="Oono Y."/>
            <person name="Muramatsu M."/>
            <person name="Hayashizaki Y."/>
            <person name="Kawai J."/>
            <person name="Carninci P."/>
            <person name="Itoh M."/>
            <person name="Ishii Y."/>
            <person name="Arakawa T."/>
            <person name="Shibata K."/>
            <person name="Shinagawa A."/>
            <person name="Shinozaki K."/>
        </authorList>
    </citation>
    <scope>NUCLEOTIDE SEQUENCE [LARGE SCALE MRNA]</scope>
    <source>
        <strain>cv. Columbia</strain>
    </source>
</reference>
<reference key="5">
    <citation type="journal article" date="2003" name="Science">
        <title>Empirical analysis of transcriptional activity in the Arabidopsis genome.</title>
        <authorList>
            <person name="Yamada K."/>
            <person name="Lim J."/>
            <person name="Dale J.M."/>
            <person name="Chen H."/>
            <person name="Shinn P."/>
            <person name="Palm C.J."/>
            <person name="Southwick A.M."/>
            <person name="Wu H.C."/>
            <person name="Kim C.J."/>
            <person name="Nguyen M."/>
            <person name="Pham P.K."/>
            <person name="Cheuk R.F."/>
            <person name="Karlin-Newmann G."/>
            <person name="Liu S.X."/>
            <person name="Lam B."/>
            <person name="Sakano H."/>
            <person name="Wu T."/>
            <person name="Yu G."/>
            <person name="Miranda M."/>
            <person name="Quach H.L."/>
            <person name="Tripp M."/>
            <person name="Chang C.H."/>
            <person name="Lee J.M."/>
            <person name="Toriumi M.J."/>
            <person name="Chan M.M."/>
            <person name="Tang C.C."/>
            <person name="Onodera C.S."/>
            <person name="Deng J.M."/>
            <person name="Akiyama K."/>
            <person name="Ansari Y."/>
            <person name="Arakawa T."/>
            <person name="Banh J."/>
            <person name="Banno F."/>
            <person name="Bowser L."/>
            <person name="Brooks S.Y."/>
            <person name="Carninci P."/>
            <person name="Chao Q."/>
            <person name="Choy N."/>
            <person name="Enju A."/>
            <person name="Goldsmith A.D."/>
            <person name="Gurjal M."/>
            <person name="Hansen N.F."/>
            <person name="Hayashizaki Y."/>
            <person name="Johnson-Hopson C."/>
            <person name="Hsuan V.W."/>
            <person name="Iida K."/>
            <person name="Karnes M."/>
            <person name="Khan S."/>
            <person name="Koesema E."/>
            <person name="Ishida J."/>
            <person name="Jiang P.X."/>
            <person name="Jones T."/>
            <person name="Kawai J."/>
            <person name="Kamiya A."/>
            <person name="Meyers C."/>
            <person name="Nakajima M."/>
            <person name="Narusaka M."/>
            <person name="Seki M."/>
            <person name="Sakurai T."/>
            <person name="Satou M."/>
            <person name="Tamse R."/>
            <person name="Vaysberg M."/>
            <person name="Wallender E.K."/>
            <person name="Wong C."/>
            <person name="Yamamura Y."/>
            <person name="Yuan S."/>
            <person name="Shinozaki K."/>
            <person name="Davis R.W."/>
            <person name="Theologis A."/>
            <person name="Ecker J.R."/>
        </authorList>
    </citation>
    <scope>NUCLEOTIDE SEQUENCE [LARGE SCALE MRNA]</scope>
    <source>
        <strain>cv. Columbia</strain>
    </source>
</reference>
<reference key="6">
    <citation type="submission" date="2009-03" db="EMBL/GenBank/DDBJ databases">
        <title>ORF cloning and analysis of Arabidopsis transcription factor genes.</title>
        <authorList>
            <person name="Fujita M."/>
            <person name="Mizukado S."/>
            <person name="Seki M."/>
            <person name="Shinozaki K."/>
            <person name="Mitsuda N."/>
            <person name="Takiguchi Y."/>
            <person name="Takagi M."/>
        </authorList>
    </citation>
    <scope>NUCLEOTIDE SEQUENCE [LARGE SCALE MRNA]</scope>
</reference>
<reference key="7">
    <citation type="journal article" date="2008" name="Plant J.">
        <title>Identification of likely orthologs of tobacco salicylic acid-binding protein 2 and their role in systemic acquired resistance in Arabidopsis thaliana.</title>
        <authorList>
            <person name="Vlot A.C."/>
            <person name="Liu P.P."/>
            <person name="Cameron R.K."/>
            <person name="Park S.W."/>
            <person name="Yang Y."/>
            <person name="Kumar D."/>
            <person name="Zhou F."/>
            <person name="Padukkavidana T."/>
            <person name="Gustafsson C."/>
            <person name="Pichersky E."/>
            <person name="Klessig D.F."/>
        </authorList>
    </citation>
    <scope>FUNCTION</scope>
    <scope>ACTIVITY REGULATION</scope>
    <scope>BIOPHYSICOCHEMICAL PROPERTIES</scope>
    <scope>INDUCTION BY PATHOGEN</scope>
</reference>
<reference key="8">
    <citation type="journal article" date="2008" name="Plant Physiol.">
        <title>Inactive methyl indole-3-acetic acid ester can be hydrolyzed and activated by several esterases belonging to the AtMES esterase family of Arabidopsis.</title>
        <authorList>
            <person name="Yang Y."/>
            <person name="Xu R."/>
            <person name="Ma C.J."/>
            <person name="Vlot A.C."/>
            <person name="Klessig D.F."/>
            <person name="Pichersky E."/>
        </authorList>
    </citation>
    <scope>GENE FAMILY</scope>
    <scope>FUNCTION</scope>
    <scope>CATALYTIC ACTIVITY</scope>
    <scope>PATHWAY</scope>
</reference>
<comment type="function">
    <text evidence="2 3">Methylesterase shown to have carboxylesterase activity, methyl indole-3-acetic acid (MeIAA) esterase activity, methyl salicylate (MeSA) esterase activity and methyl jasmonate (MeJA) esterase activity in vitro. Required to convert methyl salicylate (MeSA) to salicylic acid (SA) as part of the signal transduction pathways that activate systemic acquired resistance in systemic tissue. MeSA is believed to be an inactive form that needs to be demethylated to exert a biological effect.</text>
</comment>
<comment type="catalytic activity">
    <reaction evidence="2">
        <text>methyl (indol-3-yl)acetate + H2O = (indol-3-yl)acetate + methanol + H(+)</text>
        <dbReference type="Rhea" id="RHEA:32919"/>
        <dbReference type="ChEBI" id="CHEBI:15377"/>
        <dbReference type="ChEBI" id="CHEBI:15378"/>
        <dbReference type="ChEBI" id="CHEBI:17790"/>
        <dbReference type="ChEBI" id="CHEBI:30854"/>
        <dbReference type="ChEBI" id="CHEBI:72782"/>
    </reaction>
    <physiologicalReaction direction="left-to-right" evidence="2">
        <dbReference type="Rhea" id="RHEA:32920"/>
    </physiologicalReaction>
</comment>
<comment type="catalytic activity">
    <reaction evidence="2">
        <text>methyl (-)-jasmonate + H2O = jasmonate + methanol + H(+)</text>
        <dbReference type="Rhea" id="RHEA:55372"/>
        <dbReference type="ChEBI" id="CHEBI:15377"/>
        <dbReference type="ChEBI" id="CHEBI:15378"/>
        <dbReference type="ChEBI" id="CHEBI:15929"/>
        <dbReference type="ChEBI" id="CHEBI:17790"/>
        <dbReference type="ChEBI" id="CHEBI:58431"/>
    </reaction>
    <physiologicalReaction direction="left-to-right" evidence="2">
        <dbReference type="Rhea" id="RHEA:55373"/>
    </physiologicalReaction>
</comment>
<comment type="catalytic activity">
    <reaction evidence="2">
        <text>methyl salicylate + H2O = salicylate + methanol + H(+)</text>
        <dbReference type="Rhea" id="RHEA:33611"/>
        <dbReference type="ChEBI" id="CHEBI:15377"/>
        <dbReference type="ChEBI" id="CHEBI:15378"/>
        <dbReference type="ChEBI" id="CHEBI:17790"/>
        <dbReference type="ChEBI" id="CHEBI:30762"/>
        <dbReference type="ChEBI" id="CHEBI:31832"/>
    </reaction>
    <physiologicalReaction direction="left-to-right" evidence="2">
        <dbReference type="Rhea" id="RHEA:33612"/>
    </physiologicalReaction>
</comment>
<comment type="activity regulation">
    <text evidence="3">Esterase activity is down-regulated by salicylic acid (SA).</text>
</comment>
<comment type="biophysicochemical properties">
    <kinetics>
        <KM evidence="3">147.1 uM for methyl salicylate (MeSA)</KM>
        <Vmax evidence="3">25.88 nmol/min/ug enzyme with methyl salicylate (MeSA) as substrate</Vmax>
    </kinetics>
</comment>
<comment type="pathway">
    <text evidence="2">Plant hormone biosynthesis.</text>
</comment>
<comment type="pathway">
    <text evidence="2">Lipid metabolism; oxylipin biosynthesis.</text>
</comment>
<comment type="interaction">
    <interactant intactId="EBI-4446268">
        <id>O23171</id>
    </interactant>
    <interactant intactId="EBI-4453194">
        <id>Q9LFT6</id>
        <label>HNL</label>
    </interactant>
    <organismsDiffer>false</organismsDiffer>
    <experiments>3</experiments>
</comment>
<comment type="induction">
    <text evidence="3">By pathogen infection.</text>
</comment>
<comment type="miscellaneous">
    <text>Expression of MES9 can restore systemic acquired resistance in SAR-deficient tobacco plants.</text>
</comment>
<comment type="similarity">
    <text evidence="5">Belongs to the AB hydrolase superfamily. Methylesterase family.</text>
</comment>
<accession>O23171</accession>
<name>MES9_ARATH</name>
<organism>
    <name type="scientific">Arabidopsis thaliana</name>
    <name type="common">Mouse-ear cress</name>
    <dbReference type="NCBI Taxonomy" id="3702"/>
    <lineage>
        <taxon>Eukaryota</taxon>
        <taxon>Viridiplantae</taxon>
        <taxon>Streptophyta</taxon>
        <taxon>Embryophyta</taxon>
        <taxon>Tracheophyta</taxon>
        <taxon>Spermatophyta</taxon>
        <taxon>Magnoliopsida</taxon>
        <taxon>eudicotyledons</taxon>
        <taxon>Gunneridae</taxon>
        <taxon>Pentapetalae</taxon>
        <taxon>rosids</taxon>
        <taxon>malvids</taxon>
        <taxon>Brassicales</taxon>
        <taxon>Brassicaceae</taxon>
        <taxon>Camelineae</taxon>
        <taxon>Arabidopsis</taxon>
    </lineage>
</organism>
<keyword id="KW-0378">Hydrolase</keyword>
<keyword id="KW-0391">Immunity</keyword>
<keyword id="KW-0399">Innate immunity</keyword>
<keyword id="KW-0611">Plant defense</keyword>
<keyword id="KW-1185">Reference proteome</keyword>
<sequence length="256" mass="28744">MKHYVLVHGGCHGAWCWYKVKPMLEHSGHRVTVFDLTAHGVNMSRVEDIQTLEDFAKPLLEVLESFGSDDKVVLVAHSLGGIPAALAADMFPSKISVAVFVTSFMPDTTNPPSYVFEKFLGSITEEERMDFELGSYGTDDHPLKTAFLGPNYLKNMYLLSPIEDYELAKMLMRVTPAITSNLTGTKSLTAQGYGSISRVYIVCGEDKGIRVDFQRWMIENSPVKEVMEIKDADHMPMFSKPHELCDRLLKIADKYP</sequence>
<feature type="chain" id="PRO_0000418183" description="Methylesterase 9">
    <location>
        <begin position="1"/>
        <end position="256"/>
    </location>
</feature>
<feature type="active site" description="Acyl-ester intermediate" evidence="1">
    <location>
        <position position="78"/>
    </location>
</feature>
<feature type="active site" description="Charge relay system" evidence="1">
    <location>
        <position position="206"/>
    </location>
</feature>
<feature type="active site" description="Charge relay system" evidence="1">
    <location>
        <position position="234"/>
    </location>
</feature>
<gene>
    <name evidence="4" type="primary">MES9</name>
    <name evidence="6" type="ordered locus">At4g37150</name>
    <name evidence="8" type="ORF">AP22.78</name>
    <name evidence="7" type="ORF">C7A10.210</name>
</gene>
<proteinExistence type="evidence at protein level"/>
<evidence type="ECO:0000250" key="1">
    <source>
        <dbReference type="UniProtKB" id="Q6RYA0"/>
    </source>
</evidence>
<evidence type="ECO:0000269" key="2">
    <source>
    </source>
</evidence>
<evidence type="ECO:0000269" key="3">
    <source>
    </source>
</evidence>
<evidence type="ECO:0000303" key="4">
    <source>
    </source>
</evidence>
<evidence type="ECO:0000305" key="5"/>
<evidence type="ECO:0000312" key="6">
    <source>
        <dbReference type="Araport" id="AT4G37150"/>
    </source>
</evidence>
<evidence type="ECO:0000312" key="7">
    <source>
        <dbReference type="EMBL" id="CAB16760.1"/>
    </source>
</evidence>
<evidence type="ECO:0000312" key="8">
    <source>
        <dbReference type="EMBL" id="CAB80381.1"/>
    </source>
</evidence>